<keyword id="KW-1132">Decay of host mRNAs by virus</keyword>
<keyword id="KW-1262">Eukaryotic host gene expression shutoff by virus</keyword>
<keyword id="KW-1035">Host cytoplasm</keyword>
<keyword id="KW-1190">Host gene expression shutoff by virus</keyword>
<keyword id="KW-1192">Host mRNA suppression by virus</keyword>
<keyword id="KW-1048">Host nucleus</keyword>
<keyword id="KW-0945">Host-virus interaction</keyword>
<keyword id="KW-0688">Ribosomal frameshifting</keyword>
<organismHost>
    <name type="scientific">Aves</name>
    <dbReference type="NCBI Taxonomy" id="8782"/>
</organismHost>
<organismHost>
    <name type="scientific">Homo sapiens</name>
    <name type="common">Human</name>
    <dbReference type="NCBI Taxonomy" id="9606"/>
</organismHost>
<organismHost>
    <name type="scientific">Sus scrofa</name>
    <name type="common">Pig</name>
    <dbReference type="NCBI Taxonomy" id="9823"/>
</organismHost>
<name>PAX_I30A0</name>
<evidence type="ECO:0000250" key="1">
    <source>
        <dbReference type="UniProtKB" id="P0CK64"/>
    </source>
</evidence>
<evidence type="ECO:0000250" key="2">
    <source>
        <dbReference type="UniProtKB" id="P0CK68"/>
    </source>
</evidence>
<evidence type="ECO:0000250" key="3">
    <source>
        <dbReference type="UniProtKB" id="P0DJW8"/>
    </source>
</evidence>
<evidence type="ECO:0000250" key="4">
    <source>
        <dbReference type="UniProtKB" id="P0DXO5"/>
    </source>
</evidence>
<evidence type="ECO:0000305" key="5"/>
<feature type="chain" id="PRO_0000419413" description="Protein PA-X">
    <location>
        <begin position="1"/>
        <end position="252"/>
    </location>
</feature>
<feature type="active site" evidence="2">
    <location>
        <position position="80"/>
    </location>
</feature>
<feature type="active site" evidence="2">
    <location>
        <position position="108"/>
    </location>
</feature>
<feature type="site" description="Important for efficient shutoff activity and nuclear localization" evidence="4">
    <location>
        <position position="195"/>
    </location>
</feature>
<feature type="site" description="Important for efficient shutoff activity and nuclear localization" evidence="4">
    <location>
        <position position="198"/>
    </location>
</feature>
<feature type="site" description="Important for efficient shutoff activity and nuclear localization" evidence="4">
    <location>
        <position position="199"/>
    </location>
</feature>
<feature type="site" description="Important for efficient shutoff activity" evidence="3">
    <location>
        <position position="202"/>
    </location>
</feature>
<feature type="site" description="Important for efficient shutoff activity" evidence="3">
    <location>
        <position position="203"/>
    </location>
</feature>
<feature type="site" description="Important for efficient shutoff activity" evidence="3">
    <location>
        <position position="206"/>
    </location>
</feature>
<proteinExistence type="inferred from homology"/>
<sequence length="252" mass="29201">MEDFVRQCFNPMIVELAEKAMKEYGEDPRIETNKFAAICTHMEVSFMYSDFHFINERGESIIVESGDPNALLKHRFEIIEGRDRAMAWTVVNSICNTTGVGKPKFLPDLYDYKEDRFIEIGVTRREVHIYYLEKANKIKSEETHIHIFSFTGEEMATKADYTLDEESRARIKTRLFTIRQEMASRGLWDSFASPREAKRQLKKDLKSQGQCAGLPTKVSHRISPVLKTLGHMWMDSSRTATLRASFLKCPKK</sequence>
<accession>P0DJV0</accession>
<gene>
    <name type="primary">PA</name>
</gene>
<comment type="function">
    <text evidence="1 4">Plays a major role in the shutoff of the host protein expression by cleaving mRNAs probably via an endonuclease activity. This host shutoff allows the virus to escape from the host antiviral response (By similarity). Hijacks host RNA splicing machinery to selectively target host RNAs containing introns for destruction. This may explain the preferential degradation of RNAs that have undergone co- or post-transcriptional processing (By similarity).</text>
</comment>
<comment type="subcellular location">
    <subcellularLocation>
        <location evidence="4">Host cytoplasm</location>
    </subcellularLocation>
    <subcellularLocation>
        <location evidence="4">Host nucleus</location>
    </subcellularLocation>
</comment>
<comment type="alternative products">
    <event type="ribosomal frameshifting"/>
    <isoform>
        <id>P0DJV0-1</id>
        <name>PA-X</name>
        <sequence type="displayed"/>
    </isoform>
    <isoform>
        <id>P13175-1</id>
        <name>PA</name>
        <sequence type="external"/>
    </isoform>
</comment>
<comment type="domain">
    <text evidence="1 4">The probable endonuclease active site in the N-terminus and the basic amino acid cluster in the C-terminus are important for the shutoff activity. The C-terminus acts as a nuclear localization signal (By similarity). The C-terminus is recruited to host protein complexes involved in nuclear Pol II RNA processing (By similarity).</text>
</comment>
<comment type="similarity">
    <text evidence="5">Belongs to the influenza viruses PA-X family.</text>
</comment>
<protein>
    <recommendedName>
        <fullName>Protein PA-X</fullName>
    </recommendedName>
</protein>
<dbReference type="EMBL" id="M26076">
    <property type="status" value="NOT_ANNOTATED_CDS"/>
    <property type="molecule type" value="Genomic_RNA"/>
</dbReference>
<dbReference type="SMR" id="P0DJV0"/>
<dbReference type="GO" id="GO:0003723">
    <property type="term" value="F:RNA binding"/>
    <property type="evidence" value="ECO:0007669"/>
    <property type="project" value="InterPro"/>
</dbReference>
<dbReference type="GO" id="GO:0039694">
    <property type="term" value="P:viral RNA genome replication"/>
    <property type="evidence" value="ECO:0007669"/>
    <property type="project" value="InterPro"/>
</dbReference>
<dbReference type="GO" id="GO:0075523">
    <property type="term" value="P:viral translational frameshifting"/>
    <property type="evidence" value="ECO:0007669"/>
    <property type="project" value="UniProtKB-KW"/>
</dbReference>
<dbReference type="FunFam" id="3.40.91.90:FF:000001">
    <property type="entry name" value="Polymerase acidic protein"/>
    <property type="match status" value="1"/>
</dbReference>
<dbReference type="Gene3D" id="3.40.91.90">
    <property type="entry name" value="Influenza RNA-dependent RNA polymerase subunit PA, endonuclease domain"/>
    <property type="match status" value="1"/>
</dbReference>
<dbReference type="InterPro" id="IPR001009">
    <property type="entry name" value="PA/PA-X"/>
</dbReference>
<dbReference type="InterPro" id="IPR038372">
    <property type="entry name" value="PA/PA-X_sf"/>
</dbReference>
<dbReference type="Pfam" id="PF00603">
    <property type="entry name" value="Flu_PA"/>
    <property type="match status" value="1"/>
</dbReference>
<reference key="1">
    <citation type="journal article" date="1989" name="Virology">
        <title>Evolutionary pathways of the PA genes of influenza A viruses.</title>
        <authorList>
            <person name="Okazaki K."/>
            <person name="Kawaoka Y."/>
            <person name="Webster R.G."/>
        </authorList>
    </citation>
    <scope>NUCLEOTIDE SEQUENCE [GENOMIC RNA]</scope>
</reference>
<organism>
    <name type="scientific">Influenza A virus (strain A/Swine/Iowa/15/1930 H1N1)</name>
    <dbReference type="NCBI Taxonomy" id="380342"/>
    <lineage>
        <taxon>Viruses</taxon>
        <taxon>Riboviria</taxon>
        <taxon>Orthornavirae</taxon>
        <taxon>Negarnaviricota</taxon>
        <taxon>Polyploviricotina</taxon>
        <taxon>Insthoviricetes</taxon>
        <taxon>Articulavirales</taxon>
        <taxon>Orthomyxoviridae</taxon>
        <taxon>Alphainfluenzavirus</taxon>
        <taxon>Alphainfluenzavirus influenzae</taxon>
        <taxon>Influenza A virus</taxon>
    </lineage>
</organism>